<protein>
    <recommendedName>
        <fullName evidence="1">Transcriptional repressor NrdR</fullName>
    </recommendedName>
</protein>
<name>NRDR_XANC8</name>
<feature type="chain" id="PRO_0000230907" description="Transcriptional repressor NrdR">
    <location>
        <begin position="1"/>
        <end position="174"/>
    </location>
</feature>
<feature type="domain" description="ATP-cone" evidence="1">
    <location>
        <begin position="49"/>
        <end position="139"/>
    </location>
</feature>
<feature type="zinc finger region" evidence="1">
    <location>
        <begin position="3"/>
        <end position="34"/>
    </location>
</feature>
<sequence length="174" mass="19947">MHCPFCQHNDTRVIDSRVSEDGTTIRRRRECEACGERFSTLETIELKLPTVVKSDGGREAFDARKLRTSFDRALQKRPVSEEQIEAAVRAVVHQLRMSGEREVGSLRVGEYVMVELRKLDHVGYVRFASVYRSFQDVADFREEIEKLERELPVGSEQLPLLEAALERAGKPGKR</sequence>
<comment type="function">
    <text evidence="1">Negatively regulates transcription of bacterial ribonucleotide reductase nrd genes and operons by binding to NrdR-boxes.</text>
</comment>
<comment type="cofactor">
    <cofactor evidence="1">
        <name>Zn(2+)</name>
        <dbReference type="ChEBI" id="CHEBI:29105"/>
    </cofactor>
    <text evidence="1">Binds 1 zinc ion.</text>
</comment>
<comment type="similarity">
    <text evidence="1">Belongs to the NrdR family.</text>
</comment>
<gene>
    <name evidence="1" type="primary">nrdR</name>
    <name type="ordered locus">XC_3543</name>
</gene>
<evidence type="ECO:0000255" key="1">
    <source>
        <dbReference type="HAMAP-Rule" id="MF_00440"/>
    </source>
</evidence>
<organism>
    <name type="scientific">Xanthomonas campestris pv. campestris (strain 8004)</name>
    <dbReference type="NCBI Taxonomy" id="314565"/>
    <lineage>
        <taxon>Bacteria</taxon>
        <taxon>Pseudomonadati</taxon>
        <taxon>Pseudomonadota</taxon>
        <taxon>Gammaproteobacteria</taxon>
        <taxon>Lysobacterales</taxon>
        <taxon>Lysobacteraceae</taxon>
        <taxon>Xanthomonas</taxon>
    </lineage>
</organism>
<accession>Q4UQT7</accession>
<keyword id="KW-0067">ATP-binding</keyword>
<keyword id="KW-0238">DNA-binding</keyword>
<keyword id="KW-0479">Metal-binding</keyword>
<keyword id="KW-0547">Nucleotide-binding</keyword>
<keyword id="KW-0678">Repressor</keyword>
<keyword id="KW-0804">Transcription</keyword>
<keyword id="KW-0805">Transcription regulation</keyword>
<keyword id="KW-0862">Zinc</keyword>
<keyword id="KW-0863">Zinc-finger</keyword>
<reference key="1">
    <citation type="journal article" date="2005" name="Genome Res.">
        <title>Comparative and functional genomic analyses of the pathogenicity of phytopathogen Xanthomonas campestris pv. campestris.</title>
        <authorList>
            <person name="Qian W."/>
            <person name="Jia Y."/>
            <person name="Ren S.-X."/>
            <person name="He Y.-Q."/>
            <person name="Feng J.-X."/>
            <person name="Lu L.-F."/>
            <person name="Sun Q."/>
            <person name="Ying G."/>
            <person name="Tang D.-J."/>
            <person name="Tang H."/>
            <person name="Wu W."/>
            <person name="Hao P."/>
            <person name="Wang L."/>
            <person name="Jiang B.-L."/>
            <person name="Zeng S."/>
            <person name="Gu W.-Y."/>
            <person name="Lu G."/>
            <person name="Rong L."/>
            <person name="Tian Y."/>
            <person name="Yao Z."/>
            <person name="Fu G."/>
            <person name="Chen B."/>
            <person name="Fang R."/>
            <person name="Qiang B."/>
            <person name="Chen Z."/>
            <person name="Zhao G.-P."/>
            <person name="Tang J.-L."/>
            <person name="He C."/>
        </authorList>
    </citation>
    <scope>NUCLEOTIDE SEQUENCE [LARGE SCALE GENOMIC DNA]</scope>
    <source>
        <strain>8004</strain>
    </source>
</reference>
<proteinExistence type="inferred from homology"/>
<dbReference type="EMBL" id="CP000050">
    <property type="protein sequence ID" value="AAY50586.1"/>
    <property type="molecule type" value="Genomic_DNA"/>
</dbReference>
<dbReference type="RefSeq" id="WP_005997276.1">
    <property type="nucleotide sequence ID" value="NZ_CP155948.1"/>
</dbReference>
<dbReference type="SMR" id="Q4UQT7"/>
<dbReference type="GeneID" id="95583103"/>
<dbReference type="KEGG" id="xcb:XC_3543"/>
<dbReference type="HOGENOM" id="CLU_108412_0_0_6"/>
<dbReference type="Proteomes" id="UP000000420">
    <property type="component" value="Chromosome"/>
</dbReference>
<dbReference type="GO" id="GO:0005524">
    <property type="term" value="F:ATP binding"/>
    <property type="evidence" value="ECO:0007669"/>
    <property type="project" value="UniProtKB-KW"/>
</dbReference>
<dbReference type="GO" id="GO:0003677">
    <property type="term" value="F:DNA binding"/>
    <property type="evidence" value="ECO:0007669"/>
    <property type="project" value="UniProtKB-KW"/>
</dbReference>
<dbReference type="GO" id="GO:0008270">
    <property type="term" value="F:zinc ion binding"/>
    <property type="evidence" value="ECO:0007669"/>
    <property type="project" value="UniProtKB-UniRule"/>
</dbReference>
<dbReference type="GO" id="GO:0045892">
    <property type="term" value="P:negative regulation of DNA-templated transcription"/>
    <property type="evidence" value="ECO:0007669"/>
    <property type="project" value="UniProtKB-UniRule"/>
</dbReference>
<dbReference type="HAMAP" id="MF_00440">
    <property type="entry name" value="NrdR"/>
    <property type="match status" value="1"/>
</dbReference>
<dbReference type="InterPro" id="IPR005144">
    <property type="entry name" value="ATP-cone_dom"/>
</dbReference>
<dbReference type="InterPro" id="IPR055173">
    <property type="entry name" value="NrdR-like_N"/>
</dbReference>
<dbReference type="InterPro" id="IPR003796">
    <property type="entry name" value="RNR_NrdR-like"/>
</dbReference>
<dbReference type="NCBIfam" id="TIGR00244">
    <property type="entry name" value="transcriptional regulator NrdR"/>
    <property type="match status" value="1"/>
</dbReference>
<dbReference type="PANTHER" id="PTHR30455">
    <property type="entry name" value="TRANSCRIPTIONAL REPRESSOR NRDR"/>
    <property type="match status" value="1"/>
</dbReference>
<dbReference type="PANTHER" id="PTHR30455:SF2">
    <property type="entry name" value="TRANSCRIPTIONAL REPRESSOR NRDR"/>
    <property type="match status" value="1"/>
</dbReference>
<dbReference type="Pfam" id="PF03477">
    <property type="entry name" value="ATP-cone"/>
    <property type="match status" value="1"/>
</dbReference>
<dbReference type="Pfam" id="PF22811">
    <property type="entry name" value="Zn_ribbon_NrdR"/>
    <property type="match status" value="1"/>
</dbReference>
<dbReference type="PROSITE" id="PS51161">
    <property type="entry name" value="ATP_CONE"/>
    <property type="match status" value="1"/>
</dbReference>